<keyword id="KW-0472">Membrane</keyword>
<keyword id="KW-1185">Reference proteome</keyword>
<keyword id="KW-0812">Transmembrane</keyword>
<keyword id="KW-1133">Transmembrane helix</keyword>
<dbReference type="EMBL" id="LT708304">
    <property type="protein sequence ID" value="SIU01224.1"/>
    <property type="molecule type" value="Genomic_DNA"/>
</dbReference>
<dbReference type="RefSeq" id="NP_856252.1">
    <property type="nucleotide sequence ID" value="NC_002945.3"/>
</dbReference>
<dbReference type="RefSeq" id="WP_003413352.1">
    <property type="nucleotide sequence ID" value="NC_002945.4"/>
</dbReference>
<dbReference type="SMR" id="P65022"/>
<dbReference type="KEGG" id="mbo:BQ2027_MB2606C"/>
<dbReference type="PATRIC" id="fig|233413.5.peg.2865"/>
<dbReference type="Proteomes" id="UP000001419">
    <property type="component" value="Chromosome"/>
</dbReference>
<dbReference type="GO" id="GO:0016020">
    <property type="term" value="C:membrane"/>
    <property type="evidence" value="ECO:0007669"/>
    <property type="project" value="UniProtKB-SubCell"/>
</dbReference>
<dbReference type="InterPro" id="IPR016793">
    <property type="entry name" value="UCP021591"/>
</dbReference>
<dbReference type="PIRSF" id="PIRSF021591">
    <property type="entry name" value="UCP021591"/>
    <property type="match status" value="1"/>
</dbReference>
<proteinExistence type="predicted"/>
<comment type="subcellular location">
    <subcellularLocation>
        <location evidence="2">Membrane</location>
        <topology evidence="2">Single-pass membrane protein</topology>
    </subcellularLocation>
</comment>
<accession>P65022</accession>
<accession>A0A1R3Y1L2</accession>
<accession>Q50645</accession>
<accession>X2BL90</accession>
<evidence type="ECO:0000255" key="1"/>
<evidence type="ECO:0000305" key="2"/>
<feature type="chain" id="PRO_0000104059" description="Uncharacterized protein Mb2606c">
    <location>
        <begin position="1"/>
        <end position="154"/>
    </location>
</feature>
<feature type="transmembrane region" description="Helical" evidence="1">
    <location>
        <begin position="23"/>
        <end position="43"/>
    </location>
</feature>
<sequence>MPAGVGNASGSVLDMTSVRTVPSAVALVTFAGAALSGVIPAIARADPVGHQVTYTVTTTSDLMANIRYMSADPPSMAAFNADSSKYMITLHTPIAGGQPLVYTATLANPSQWAIVTASGGLRVNPEFHCEIVVDGQVVVSQDGGSGVQCSTRPW</sequence>
<organism>
    <name type="scientific">Mycobacterium bovis (strain ATCC BAA-935 / AF2122/97)</name>
    <dbReference type="NCBI Taxonomy" id="233413"/>
    <lineage>
        <taxon>Bacteria</taxon>
        <taxon>Bacillati</taxon>
        <taxon>Actinomycetota</taxon>
        <taxon>Actinomycetes</taxon>
        <taxon>Mycobacteriales</taxon>
        <taxon>Mycobacteriaceae</taxon>
        <taxon>Mycobacterium</taxon>
        <taxon>Mycobacterium tuberculosis complex</taxon>
    </lineage>
</organism>
<gene>
    <name type="ordered locus">BQ2027_MB2606C</name>
</gene>
<protein>
    <recommendedName>
        <fullName>Uncharacterized protein Mb2606c</fullName>
    </recommendedName>
</protein>
<name>Y2606_MYCBO</name>
<reference key="1">
    <citation type="journal article" date="2003" name="Proc. Natl. Acad. Sci. U.S.A.">
        <title>The complete genome sequence of Mycobacterium bovis.</title>
        <authorList>
            <person name="Garnier T."/>
            <person name="Eiglmeier K."/>
            <person name="Camus J.-C."/>
            <person name="Medina N."/>
            <person name="Mansoor H."/>
            <person name="Pryor M."/>
            <person name="Duthoy S."/>
            <person name="Grondin S."/>
            <person name="Lacroix C."/>
            <person name="Monsempe C."/>
            <person name="Simon S."/>
            <person name="Harris B."/>
            <person name="Atkin R."/>
            <person name="Doggett J."/>
            <person name="Mayes R."/>
            <person name="Keating L."/>
            <person name="Wheeler P.R."/>
            <person name="Parkhill J."/>
            <person name="Barrell B.G."/>
            <person name="Cole S.T."/>
            <person name="Gordon S.V."/>
            <person name="Hewinson R.G."/>
        </authorList>
    </citation>
    <scope>NUCLEOTIDE SEQUENCE [LARGE SCALE GENOMIC DNA]</scope>
    <source>
        <strain>ATCC BAA-935 / AF2122/97</strain>
    </source>
</reference>
<reference key="2">
    <citation type="journal article" date="2017" name="Genome Announc.">
        <title>Updated reference genome sequence and annotation of Mycobacterium bovis AF2122/97.</title>
        <authorList>
            <person name="Malone K.M."/>
            <person name="Farrell D."/>
            <person name="Stuber T.P."/>
            <person name="Schubert O.T."/>
            <person name="Aebersold R."/>
            <person name="Robbe-Austerman S."/>
            <person name="Gordon S.V."/>
        </authorList>
    </citation>
    <scope>NUCLEOTIDE SEQUENCE [LARGE SCALE GENOMIC DNA]</scope>
    <scope>GENOME REANNOTATION</scope>
    <source>
        <strain>ATCC BAA-935 / AF2122/97</strain>
    </source>
</reference>